<comment type="function">
    <text>Probable ATPase of unknown function. Its presence in a non-photosynthetic plant (Epifagus virginiana) and experiments in tobacco indicate that it has an essential function which is probably not related to photosynthesis.</text>
</comment>
<comment type="subcellular location">
    <subcellularLocation>
        <location>Plastid</location>
        <location>Chloroplast stroma</location>
    </subcellularLocation>
</comment>
<comment type="miscellaneous">
    <text>The detected polypeptide is 170 kDa; it is not clear which parts of the protein are stably expressed.</text>
</comment>
<comment type="similarity">
    <text evidence="2">Belongs to the Ycf2 family.</text>
</comment>
<name>YCF2_SPIOL</name>
<sequence>MKGHQFKSWIFELREILREIKNSHYFLDSWTQFNSVGSFIHIFFYQERFLKLFDPRIWSILLSPNSQGSTSNRYFTIKGVVLFVVVVLIYRITNRNMVERKNLYLIGLFPIPMNSIGPRNDTLEKSFGSSNINRLIVSLLYLPKGKKISESYFLDPKESTWFLPITKKCIMPESNRGSRWWRNWIGKRRDSSCKISNETVAGIEISFKEKDIQYLEFPFVYYMDDPIRKDHDWELFDCLSLFLRNVSRENWIWLDNVRLVNKDRFFSKVRNVSSNIQYDFTRSSFVQVTDSSQLKESSDQSRDRSNSISNADSEYHTLINKREIQQLKERSILRDPSFLQTEGTEIESDRFPKCLSGYSSMPRLFTAREKQMIIHLLPEEIEQLLENPTRSIRSFFSGRWSELHLGSNPTERSTRDPQLLKKQQDVSFAPSRQSENKEMVNIFKIIKYLQNTVSIHPISSDPGCDMVPKDELDMDSSDKISFLNKNSFFDLFHLFHDRNRGGYALHHDFESEEKFQEMADLFTLSITDPDLVYHRGFSFSIDSCGLDQKQFLNEVFNSRDESKKKSLLVLSPIFYEENESFYRRIRKKGVRISRNVLNRFFLINRSDRSFEYGIQRDQIGNDTLNHRTIRKYMINQDFSNLKKSQKKWFDPLIFLSRTERFMNRDPDAYRYKWFNGSKNFQEHLEHFVSEQKSRFQVVFDQLRINQYSIDWSEVIDKKDLSKSLRFFLSKSLRFFLSKLLLFLSNSLPFFFVSFGNIPINRSEIRIYELKGPNDQLYNPLVESIGLQIVHLKKWKAFLLDDHDTFQKSKFLINGGTISPFLFNKIPKWMIDSFHTRNNSGKSFDNTDSYFSMISHDQNNWLNPVKPFHRSSLISSFYKANQLRFLNNPHHFCFYCNKRFPFYMEKARINNSDFTYRQFLNILFIHNKLFSLCVGKKKHAFLERDTISPIESQVSNIFLPNDFPIRSDLLVRRTIYSIADISGTPLTEGQLVHFERTYCQPLSDMNLSDSEKKNLHQYLNFNSNMGFIYTPCSEKYLLSEKRKKRSLCLKKCVEKGQMYRTFQRDSAFSTLSKWNLFQTYMPWFLTSTGYKYLNFLFLDTFSDLLPILSSSQKFLSILHDIMHGSGISWRILQKKLCLPPWNLISEISSKCLHNLLLPEEMIHRNNESPLIWTHLASPNVREFFYSILFLLFVAGYLVRTHLLFVFRASSELQTEFERVKSLMIPSYMIELRKLLDRYPTSEPNSFWLKNLFLVALEQLGDSLEEIRGSASGDNMLLGGGPGPAYGFKSIRSKKKYLNINLIDILDLISIIPNPINRITFSRNTRHLSHTSKEIYSLIRKRKRVNGDWIDDKIESWVASSDSIDDEEREFLVQFSTLTTEKRIDQILLSLTHSDHLSKNDSGYQLIEQPGAIYLRYLVDIHKKYLMNYEFNTSCLAERRVFLAHYQTITYSQTSCGANSFHFPSHGKPFSLRLALSPSRGILVIGSIGTGRSYLVKYLATNSYVPFITVFLNKFLDNKPKGSLIDASDDIDRDLDTELELLTMMNALTMDMMPEIDQFSITLQFELAKAMSPCIIWIPNIHDLDVNESNYLSLGLFVNYLSRDCERGSTRNILVIASTHIPQKVDPALIAPNQLNTCIKIRRLRIPQQRKHFFTLSYTRGFHLEKKMFHTNGFGSITMGSNVRDLVAFINEALSISITQKKSIIDTNTIRSALHRQTWDLRSQVRSVQDHGILFYQIGRAVAQNVLLSNCPIDPISTYMKKKSCNEGDSYLYKWYFELGTSMKKLTILLYLLSCSAGSVAQDLWSLPGPDEKNGITSYGLVENDSYLVHGLLEVEGALVGSSRIEKACSQNDRVTLFLRPELRNPLDMMQNGSCSILDHRFLYEKYESELEEGEGALDPQQIEEDLFNHIVWAPRIWNPWGFLFDCIERPNELGFPYWARSFRGKRSIYDKEDELQENDSEFLQSGTMQYQTRDRSSKEQGFFRISQFIWDPADPLFFLFKDQPFVSVFSHREFFADEEISKGLLTSQMNPPISIFQRWFIKNTQEKHFELLINRQRWLRTNSSLSNGSFRSNTLSESYQYLSNLFLSNGTLLDQMTKTLLRKRWLFPDEMKIGFMQEEKDFPFLSRKDMWP</sequence>
<proteinExistence type="inferred from homology"/>
<feature type="chain" id="PRO_0000223070" description="Protein Ycf2">
    <location>
        <begin position="1"/>
        <end position="2131"/>
    </location>
</feature>
<feature type="binding site" evidence="1">
    <location>
        <begin position="1484"/>
        <end position="1491"/>
    </location>
    <ligand>
        <name>ATP</name>
        <dbReference type="ChEBI" id="CHEBI:30616"/>
    </ligand>
</feature>
<feature type="sequence conflict" description="In Ref. 1; CAA30743." evidence="2" ref="1">
    <original>I</original>
    <variation>T</variation>
    <location>
        <position position="853"/>
    </location>
</feature>
<feature type="sequence conflict" description="In Ref. 1; CAA30743." evidence="2" ref="1">
    <original>K</original>
    <variation>N</variation>
    <location>
        <position position="937"/>
    </location>
</feature>
<feature type="sequence conflict" description="In Ref. 1; CAA30743." evidence="2" ref="1">
    <original>T</original>
    <variation>P</variation>
    <location>
        <position position="973"/>
    </location>
</feature>
<feature type="sequence conflict" description="In Ref. 1; CAA30743." evidence="2" ref="1">
    <original>S</original>
    <variation>T</variation>
    <location>
        <position position="1946"/>
    </location>
</feature>
<evidence type="ECO:0000255" key="1"/>
<evidence type="ECO:0000305" key="2"/>
<keyword id="KW-0067">ATP-binding</keyword>
<keyword id="KW-0150">Chloroplast</keyword>
<keyword id="KW-0547">Nucleotide-binding</keyword>
<keyword id="KW-0934">Plastid</keyword>
<keyword id="KW-1185">Reference proteome</keyword>
<geneLocation type="chloroplast"/>
<reference key="1">
    <citation type="journal article" date="1988" name="Curr. Genet.">
        <title>Characterization of a large inversion in the spinach chloroplast genome relative to Marchantia: a possible transposon-mediated origin.</title>
        <authorList>
            <person name="Zhou D.X."/>
            <person name="Massenet O."/>
            <person name="Quigley F."/>
            <person name="Marion M.J."/>
            <person name="Moneger F."/>
            <person name="Huber P."/>
            <person name="Mache R."/>
        </authorList>
    </citation>
    <scope>NUCLEOTIDE SEQUENCE [GENOMIC DNA]</scope>
</reference>
<reference key="2">
    <citation type="journal article" date="2001" name="Plant Mol. Biol.">
        <title>The plastid chromosome of spinach (Spinacia oleracea): complete nucleotide sequence and gene organization.</title>
        <authorList>
            <person name="Schmitz-Linneweber C."/>
            <person name="Maier R.M."/>
            <person name="Alcaraz J.-P."/>
            <person name="Cottet A."/>
            <person name="Herrmann R.G."/>
            <person name="Mache R."/>
        </authorList>
    </citation>
    <scope>NUCLEOTIDE SEQUENCE [LARGE SCALE GENOMIC DNA]</scope>
    <source>
        <strain>cv. Geant d'hiver</strain>
        <strain>cv. Monatol</strain>
    </source>
</reference>
<reference key="3">
    <citation type="journal article" date="1997" name="Am. J. Bot.">
        <title>Relationships in the Caryophyllales as suggested by phylogenetic analyses of partial chloroplast DNA ORF2280 homolog sequences.</title>
        <authorList>
            <person name="Downie S.R."/>
            <person name="Katz-Downie D.S."/>
            <person name="Cho K.-J."/>
        </authorList>
    </citation>
    <scope>NUCLEOTIDE SEQUENCE [GENOMIC DNA] OF 191-273 AND 532-672</scope>
</reference>
<reference key="4">
    <citation type="journal article" date="1993" name="Plant Mol. Biol.">
        <title>Large unidentified open reading frame in plastid DNA (ORF2280) is expressed in chloroplasts.</title>
        <authorList>
            <person name="Glick R.E."/>
            <person name="Sears B.B."/>
        </authorList>
    </citation>
    <scope>DETECTION OF THE PROTEIN</scope>
    <source>
        <tissue>Green leaf</tissue>
    </source>
</reference>
<dbReference type="EMBL" id="X07908">
    <property type="protein sequence ID" value="CAA30743.1"/>
    <property type="molecule type" value="Genomic_DNA"/>
</dbReference>
<dbReference type="EMBL" id="AJ400848">
    <property type="protein sequence ID" value="CAB88802.1"/>
    <property type="molecule type" value="Genomic_DNA"/>
</dbReference>
<dbReference type="EMBL" id="AJ400848">
    <property type="protein sequence ID" value="CAB88769.1"/>
    <property type="molecule type" value="Genomic_DNA"/>
</dbReference>
<dbReference type="EMBL" id="U48521">
    <property type="protein sequence ID" value="AAB50540.1"/>
    <property type="molecule type" value="Genomic_DNA"/>
</dbReference>
<dbReference type="EMBL" id="U48557">
    <property type="protein sequence ID" value="AAB50519.1"/>
    <property type="molecule type" value="Genomic_DNA"/>
</dbReference>
<dbReference type="PIR" id="S01446">
    <property type="entry name" value="S01446"/>
</dbReference>
<dbReference type="FunCoup" id="P08973">
    <property type="interactions" value="12"/>
</dbReference>
<dbReference type="STRING" id="3562.P08973"/>
<dbReference type="KEGG" id="soe:2715689"/>
<dbReference type="InParanoid" id="P08973"/>
<dbReference type="OrthoDB" id="877397at2759"/>
<dbReference type="Proteomes" id="UP001155700">
    <property type="component" value="Unplaced"/>
</dbReference>
<dbReference type="GO" id="GO:0009570">
    <property type="term" value="C:chloroplast stroma"/>
    <property type="evidence" value="ECO:0007669"/>
    <property type="project" value="UniProtKB-SubCell"/>
</dbReference>
<dbReference type="GO" id="GO:0005524">
    <property type="term" value="F:ATP binding"/>
    <property type="evidence" value="ECO:0007669"/>
    <property type="project" value="UniProtKB-KW"/>
</dbReference>
<dbReference type="GO" id="GO:0016887">
    <property type="term" value="F:ATP hydrolysis activity"/>
    <property type="evidence" value="ECO:0007669"/>
    <property type="project" value="InterPro"/>
</dbReference>
<dbReference type="CDD" id="cd19505">
    <property type="entry name" value="RecA-like_Ycf2"/>
    <property type="match status" value="1"/>
</dbReference>
<dbReference type="Gene3D" id="3.40.50.300">
    <property type="entry name" value="P-loop containing nucleotide triphosphate hydrolases"/>
    <property type="match status" value="1"/>
</dbReference>
<dbReference type="HAMAP" id="MF_01330">
    <property type="entry name" value="Ycf2"/>
    <property type="match status" value="1"/>
</dbReference>
<dbReference type="InterPro" id="IPR003959">
    <property type="entry name" value="ATPase_AAA_core"/>
</dbReference>
<dbReference type="InterPro" id="IPR027417">
    <property type="entry name" value="P-loop_NTPase"/>
</dbReference>
<dbReference type="InterPro" id="IPR008543">
    <property type="entry name" value="Uncharacterised_Ycf2"/>
</dbReference>
<dbReference type="InterPro" id="IPR056777">
    <property type="entry name" value="Ycf2_N"/>
</dbReference>
<dbReference type="PANTHER" id="PTHR33078:SF51">
    <property type="entry name" value="PROTEIN TIC 214"/>
    <property type="match status" value="1"/>
</dbReference>
<dbReference type="PANTHER" id="PTHR33078">
    <property type="entry name" value="PROTEIN YCF2-RELATED"/>
    <property type="match status" value="1"/>
</dbReference>
<dbReference type="Pfam" id="PF00004">
    <property type="entry name" value="AAA"/>
    <property type="match status" value="1"/>
</dbReference>
<dbReference type="Pfam" id="PF05695">
    <property type="entry name" value="Ycf2"/>
    <property type="match status" value="3"/>
</dbReference>
<dbReference type="SUPFAM" id="SSF52540">
    <property type="entry name" value="P-loop containing nucleoside triphosphate hydrolases"/>
    <property type="match status" value="1"/>
</dbReference>
<gene>
    <name type="primary">ycf2-A</name>
</gene>
<gene>
    <name type="primary">ycf2-B</name>
</gene>
<organism>
    <name type="scientific">Spinacia oleracea</name>
    <name type="common">Spinach</name>
    <dbReference type="NCBI Taxonomy" id="3562"/>
    <lineage>
        <taxon>Eukaryota</taxon>
        <taxon>Viridiplantae</taxon>
        <taxon>Streptophyta</taxon>
        <taxon>Embryophyta</taxon>
        <taxon>Tracheophyta</taxon>
        <taxon>Spermatophyta</taxon>
        <taxon>Magnoliopsida</taxon>
        <taxon>eudicotyledons</taxon>
        <taxon>Gunneridae</taxon>
        <taxon>Pentapetalae</taxon>
        <taxon>Caryophyllales</taxon>
        <taxon>Chenopodiaceae</taxon>
        <taxon>Chenopodioideae</taxon>
        <taxon>Anserineae</taxon>
        <taxon>Spinacia</taxon>
    </lineage>
</organism>
<accession>P08973</accession>
<accession>Q9M3I2</accession>
<accession>Q9THF6</accession>
<accession>Q9THF7</accession>
<protein>
    <recommendedName>
        <fullName>Protein Ycf2</fullName>
    </recommendedName>
</protein>